<evidence type="ECO:0000255" key="1">
    <source>
        <dbReference type="HAMAP-Rule" id="MF_00318"/>
    </source>
</evidence>
<dbReference type="EC" id="4.2.1.11" evidence="1"/>
<dbReference type="EMBL" id="AE016879">
    <property type="protein sequence ID" value="AAP29024.1"/>
    <property type="molecule type" value="Genomic_DNA"/>
</dbReference>
<dbReference type="EMBL" id="AE017334">
    <property type="protein sequence ID" value="AAT34498.1"/>
    <property type="molecule type" value="Genomic_DNA"/>
</dbReference>
<dbReference type="EMBL" id="AE017225">
    <property type="protein sequence ID" value="AAT57274.1"/>
    <property type="molecule type" value="Genomic_DNA"/>
</dbReference>
<dbReference type="RefSeq" id="NP_847538.1">
    <property type="nucleotide sequence ID" value="NC_003997.3"/>
</dbReference>
<dbReference type="RefSeq" id="WP_000103949.1">
    <property type="nucleotide sequence ID" value="NZ_WXXJ01000012.1"/>
</dbReference>
<dbReference type="RefSeq" id="YP_031224.1">
    <property type="nucleotide sequence ID" value="NC_005945.1"/>
</dbReference>
<dbReference type="SMR" id="Q81X78"/>
<dbReference type="IntAct" id="Q81X78">
    <property type="interactions" value="6"/>
</dbReference>
<dbReference type="STRING" id="261594.GBAA_5364"/>
<dbReference type="DNASU" id="1084902"/>
<dbReference type="GeneID" id="83638809"/>
<dbReference type="KEGG" id="ban:BA_5364"/>
<dbReference type="KEGG" id="bar:GBAA_5364"/>
<dbReference type="KEGG" id="bat:BAS4985"/>
<dbReference type="PATRIC" id="fig|198094.11.peg.5323"/>
<dbReference type="eggNOG" id="COG0148">
    <property type="taxonomic scope" value="Bacteria"/>
</dbReference>
<dbReference type="HOGENOM" id="CLU_031223_2_1_9"/>
<dbReference type="OMA" id="RCMMSHR"/>
<dbReference type="UniPathway" id="UPA00109">
    <property type="reaction ID" value="UER00187"/>
</dbReference>
<dbReference type="Proteomes" id="UP000000427">
    <property type="component" value="Chromosome"/>
</dbReference>
<dbReference type="Proteomes" id="UP000000594">
    <property type="component" value="Chromosome"/>
</dbReference>
<dbReference type="GO" id="GO:0009986">
    <property type="term" value="C:cell surface"/>
    <property type="evidence" value="ECO:0007669"/>
    <property type="project" value="UniProtKB-SubCell"/>
</dbReference>
<dbReference type="GO" id="GO:0005576">
    <property type="term" value="C:extracellular region"/>
    <property type="evidence" value="ECO:0007669"/>
    <property type="project" value="UniProtKB-SubCell"/>
</dbReference>
<dbReference type="GO" id="GO:0000015">
    <property type="term" value="C:phosphopyruvate hydratase complex"/>
    <property type="evidence" value="ECO:0007669"/>
    <property type="project" value="InterPro"/>
</dbReference>
<dbReference type="GO" id="GO:0000287">
    <property type="term" value="F:magnesium ion binding"/>
    <property type="evidence" value="ECO:0007669"/>
    <property type="project" value="UniProtKB-UniRule"/>
</dbReference>
<dbReference type="GO" id="GO:0004634">
    <property type="term" value="F:phosphopyruvate hydratase activity"/>
    <property type="evidence" value="ECO:0007669"/>
    <property type="project" value="UniProtKB-UniRule"/>
</dbReference>
<dbReference type="GO" id="GO:0006096">
    <property type="term" value="P:glycolytic process"/>
    <property type="evidence" value="ECO:0007669"/>
    <property type="project" value="UniProtKB-UniRule"/>
</dbReference>
<dbReference type="CDD" id="cd03313">
    <property type="entry name" value="enolase"/>
    <property type="match status" value="1"/>
</dbReference>
<dbReference type="FunFam" id="3.20.20.120:FF:000001">
    <property type="entry name" value="Enolase"/>
    <property type="match status" value="1"/>
</dbReference>
<dbReference type="FunFam" id="3.30.390.10:FF:000001">
    <property type="entry name" value="Enolase"/>
    <property type="match status" value="1"/>
</dbReference>
<dbReference type="Gene3D" id="3.20.20.120">
    <property type="entry name" value="Enolase-like C-terminal domain"/>
    <property type="match status" value="1"/>
</dbReference>
<dbReference type="Gene3D" id="3.30.390.10">
    <property type="entry name" value="Enolase-like, N-terminal domain"/>
    <property type="match status" value="1"/>
</dbReference>
<dbReference type="HAMAP" id="MF_00318">
    <property type="entry name" value="Enolase"/>
    <property type="match status" value="1"/>
</dbReference>
<dbReference type="InterPro" id="IPR000941">
    <property type="entry name" value="Enolase"/>
</dbReference>
<dbReference type="InterPro" id="IPR036849">
    <property type="entry name" value="Enolase-like_C_sf"/>
</dbReference>
<dbReference type="InterPro" id="IPR029017">
    <property type="entry name" value="Enolase-like_N"/>
</dbReference>
<dbReference type="InterPro" id="IPR020810">
    <property type="entry name" value="Enolase_C"/>
</dbReference>
<dbReference type="InterPro" id="IPR020809">
    <property type="entry name" value="Enolase_CS"/>
</dbReference>
<dbReference type="InterPro" id="IPR020811">
    <property type="entry name" value="Enolase_N"/>
</dbReference>
<dbReference type="NCBIfam" id="TIGR01060">
    <property type="entry name" value="eno"/>
    <property type="match status" value="1"/>
</dbReference>
<dbReference type="PANTHER" id="PTHR11902">
    <property type="entry name" value="ENOLASE"/>
    <property type="match status" value="1"/>
</dbReference>
<dbReference type="PANTHER" id="PTHR11902:SF1">
    <property type="entry name" value="ENOLASE"/>
    <property type="match status" value="1"/>
</dbReference>
<dbReference type="Pfam" id="PF00113">
    <property type="entry name" value="Enolase_C"/>
    <property type="match status" value="1"/>
</dbReference>
<dbReference type="Pfam" id="PF03952">
    <property type="entry name" value="Enolase_N"/>
    <property type="match status" value="1"/>
</dbReference>
<dbReference type="PIRSF" id="PIRSF001400">
    <property type="entry name" value="Enolase"/>
    <property type="match status" value="1"/>
</dbReference>
<dbReference type="PRINTS" id="PR00148">
    <property type="entry name" value="ENOLASE"/>
</dbReference>
<dbReference type="SFLD" id="SFLDS00001">
    <property type="entry name" value="Enolase"/>
    <property type="match status" value="1"/>
</dbReference>
<dbReference type="SFLD" id="SFLDF00002">
    <property type="entry name" value="enolase"/>
    <property type="match status" value="1"/>
</dbReference>
<dbReference type="SMART" id="SM01192">
    <property type="entry name" value="Enolase_C"/>
    <property type="match status" value="1"/>
</dbReference>
<dbReference type="SMART" id="SM01193">
    <property type="entry name" value="Enolase_N"/>
    <property type="match status" value="1"/>
</dbReference>
<dbReference type="SUPFAM" id="SSF51604">
    <property type="entry name" value="Enolase C-terminal domain-like"/>
    <property type="match status" value="1"/>
</dbReference>
<dbReference type="SUPFAM" id="SSF54826">
    <property type="entry name" value="Enolase N-terminal domain-like"/>
    <property type="match status" value="1"/>
</dbReference>
<dbReference type="PROSITE" id="PS00164">
    <property type="entry name" value="ENOLASE"/>
    <property type="match status" value="1"/>
</dbReference>
<name>ENO_BACAN</name>
<feature type="chain" id="PRO_0000133833" description="Enolase">
    <location>
        <begin position="1"/>
        <end position="431"/>
    </location>
</feature>
<feature type="active site" description="Proton donor" evidence="1">
    <location>
        <position position="205"/>
    </location>
</feature>
<feature type="active site" description="Proton acceptor" evidence="1">
    <location>
        <position position="340"/>
    </location>
</feature>
<feature type="binding site" evidence="1">
    <location>
        <position position="163"/>
    </location>
    <ligand>
        <name>(2R)-2-phosphoglycerate</name>
        <dbReference type="ChEBI" id="CHEBI:58289"/>
    </ligand>
</feature>
<feature type="binding site" evidence="1">
    <location>
        <position position="242"/>
    </location>
    <ligand>
        <name>Mg(2+)</name>
        <dbReference type="ChEBI" id="CHEBI:18420"/>
    </ligand>
</feature>
<feature type="binding site" evidence="1">
    <location>
        <position position="288"/>
    </location>
    <ligand>
        <name>Mg(2+)</name>
        <dbReference type="ChEBI" id="CHEBI:18420"/>
    </ligand>
</feature>
<feature type="binding site" evidence="1">
    <location>
        <position position="315"/>
    </location>
    <ligand>
        <name>Mg(2+)</name>
        <dbReference type="ChEBI" id="CHEBI:18420"/>
    </ligand>
</feature>
<feature type="binding site" evidence="1">
    <location>
        <position position="340"/>
    </location>
    <ligand>
        <name>(2R)-2-phosphoglycerate</name>
        <dbReference type="ChEBI" id="CHEBI:58289"/>
    </ligand>
</feature>
<feature type="binding site" evidence="1">
    <location>
        <position position="369"/>
    </location>
    <ligand>
        <name>(2R)-2-phosphoglycerate</name>
        <dbReference type="ChEBI" id="CHEBI:58289"/>
    </ligand>
</feature>
<feature type="binding site" evidence="1">
    <location>
        <position position="370"/>
    </location>
    <ligand>
        <name>(2R)-2-phosphoglycerate</name>
        <dbReference type="ChEBI" id="CHEBI:58289"/>
    </ligand>
</feature>
<feature type="binding site" evidence="1">
    <location>
        <position position="391"/>
    </location>
    <ligand>
        <name>(2R)-2-phosphoglycerate</name>
        <dbReference type="ChEBI" id="CHEBI:58289"/>
    </ligand>
</feature>
<keyword id="KW-0963">Cytoplasm</keyword>
<keyword id="KW-0324">Glycolysis</keyword>
<keyword id="KW-0456">Lyase</keyword>
<keyword id="KW-0460">Magnesium</keyword>
<keyword id="KW-0479">Metal-binding</keyword>
<keyword id="KW-1185">Reference proteome</keyword>
<keyword id="KW-0964">Secreted</keyword>
<sequence length="431" mass="46418">MSTIIDVYAREVLDSRGNPTVEVEVYTESGAFGRAIVPSGASTGEHEAVELRDGDKSRYLGKGVMNAVNNVNEAIAPEIVGFDVTDQAGIDRAMIELDGTPNKGKLGANAILGVSMAVAHAAADFVGLPLYRYLGGFNAKQLPTPMMNIINGGSHADNNVDFQEFMILPVGAPTFKESIRMGAEVFHALKAVLHDKGLNTAVGDEGGFAPNLGSNREALEVIIEAIEKAGYKAGENVFLGMDVASSEFYNKETGKYDLAGEGRTGLTSAEMVDFYEELCKDFPIISIEDGLDENDWDGHKLLTERIGDKVQLVGDDLFVTNTQKLAEGIEKGISNSILIKVNQIGTLTETFEAIEMAKRAGYTAVVSHRSGETEDATIADIAVATNAGQIKTGSMSRTDRIAKYNQLLRIEDELGEIAVYDGIKSFYNIKR</sequence>
<gene>
    <name evidence="1" type="primary">eno</name>
    <name type="ordered locus">BA_5364</name>
    <name type="ordered locus">GBAA_5364</name>
    <name type="ordered locus">BAS4985</name>
</gene>
<comment type="function">
    <text evidence="1">Catalyzes the reversible conversion of 2-phosphoglycerate (2-PG) into phosphoenolpyruvate (PEP). It is essential for the degradation of carbohydrates via glycolysis.</text>
</comment>
<comment type="catalytic activity">
    <reaction evidence="1">
        <text>(2R)-2-phosphoglycerate = phosphoenolpyruvate + H2O</text>
        <dbReference type="Rhea" id="RHEA:10164"/>
        <dbReference type="ChEBI" id="CHEBI:15377"/>
        <dbReference type="ChEBI" id="CHEBI:58289"/>
        <dbReference type="ChEBI" id="CHEBI:58702"/>
        <dbReference type="EC" id="4.2.1.11"/>
    </reaction>
</comment>
<comment type="cofactor">
    <cofactor evidence="1">
        <name>Mg(2+)</name>
        <dbReference type="ChEBI" id="CHEBI:18420"/>
    </cofactor>
    <text evidence="1">Binds a second Mg(2+) ion via substrate during catalysis.</text>
</comment>
<comment type="pathway">
    <text evidence="1">Carbohydrate degradation; glycolysis; pyruvate from D-glyceraldehyde 3-phosphate: step 4/5.</text>
</comment>
<comment type="subcellular location">
    <subcellularLocation>
        <location evidence="1">Cytoplasm</location>
    </subcellularLocation>
    <subcellularLocation>
        <location evidence="1">Secreted</location>
    </subcellularLocation>
    <subcellularLocation>
        <location evidence="1">Cell surface</location>
    </subcellularLocation>
    <text evidence="1">Fractions of enolase are present in both the cytoplasm and on the cell surface.</text>
</comment>
<comment type="similarity">
    <text evidence="1">Belongs to the enolase family.</text>
</comment>
<organism>
    <name type="scientific">Bacillus anthracis</name>
    <dbReference type="NCBI Taxonomy" id="1392"/>
    <lineage>
        <taxon>Bacteria</taxon>
        <taxon>Bacillati</taxon>
        <taxon>Bacillota</taxon>
        <taxon>Bacilli</taxon>
        <taxon>Bacillales</taxon>
        <taxon>Bacillaceae</taxon>
        <taxon>Bacillus</taxon>
        <taxon>Bacillus cereus group</taxon>
    </lineage>
</organism>
<protein>
    <recommendedName>
        <fullName evidence="1">Enolase</fullName>
        <ecNumber evidence="1">4.2.1.11</ecNumber>
    </recommendedName>
    <alternativeName>
        <fullName evidence="1">2-phospho-D-glycerate hydro-lyase</fullName>
    </alternativeName>
    <alternativeName>
        <fullName evidence="1">2-phosphoglycerate dehydratase</fullName>
    </alternativeName>
</protein>
<accession>Q81X78</accession>
<accession>Q6HR14</accession>
<accession>Q6KKD3</accession>
<reference key="1">
    <citation type="journal article" date="2003" name="Nature">
        <title>The genome sequence of Bacillus anthracis Ames and comparison to closely related bacteria.</title>
        <authorList>
            <person name="Read T.D."/>
            <person name="Peterson S.N."/>
            <person name="Tourasse N.J."/>
            <person name="Baillie L.W."/>
            <person name="Paulsen I.T."/>
            <person name="Nelson K.E."/>
            <person name="Tettelin H."/>
            <person name="Fouts D.E."/>
            <person name="Eisen J.A."/>
            <person name="Gill S.R."/>
            <person name="Holtzapple E.K."/>
            <person name="Okstad O.A."/>
            <person name="Helgason E."/>
            <person name="Rilstone J."/>
            <person name="Wu M."/>
            <person name="Kolonay J.F."/>
            <person name="Beanan M.J."/>
            <person name="Dodson R.J."/>
            <person name="Brinkac L.M."/>
            <person name="Gwinn M.L."/>
            <person name="DeBoy R.T."/>
            <person name="Madpu R."/>
            <person name="Daugherty S.C."/>
            <person name="Durkin A.S."/>
            <person name="Haft D.H."/>
            <person name="Nelson W.C."/>
            <person name="Peterson J.D."/>
            <person name="Pop M."/>
            <person name="Khouri H.M."/>
            <person name="Radune D."/>
            <person name="Benton J.L."/>
            <person name="Mahamoud Y."/>
            <person name="Jiang L."/>
            <person name="Hance I.R."/>
            <person name="Weidman J.F."/>
            <person name="Berry K.J."/>
            <person name="Plaut R.D."/>
            <person name="Wolf A.M."/>
            <person name="Watkins K.L."/>
            <person name="Nierman W.C."/>
            <person name="Hazen A."/>
            <person name="Cline R.T."/>
            <person name="Redmond C."/>
            <person name="Thwaite J.E."/>
            <person name="White O."/>
            <person name="Salzberg S.L."/>
            <person name="Thomason B."/>
            <person name="Friedlander A.M."/>
            <person name="Koehler T.M."/>
            <person name="Hanna P.C."/>
            <person name="Kolstoe A.-B."/>
            <person name="Fraser C.M."/>
        </authorList>
    </citation>
    <scope>NUCLEOTIDE SEQUENCE [LARGE SCALE GENOMIC DNA]</scope>
    <source>
        <strain>Ames / isolate Porton</strain>
    </source>
</reference>
<reference key="2">
    <citation type="journal article" date="2009" name="J. Bacteriol.">
        <title>The complete genome sequence of Bacillus anthracis Ames 'Ancestor'.</title>
        <authorList>
            <person name="Ravel J."/>
            <person name="Jiang L."/>
            <person name="Stanley S.T."/>
            <person name="Wilson M.R."/>
            <person name="Decker R.S."/>
            <person name="Read T.D."/>
            <person name="Worsham P."/>
            <person name="Keim P.S."/>
            <person name="Salzberg S.L."/>
            <person name="Fraser-Liggett C.M."/>
            <person name="Rasko D.A."/>
        </authorList>
    </citation>
    <scope>NUCLEOTIDE SEQUENCE [LARGE SCALE GENOMIC DNA]</scope>
    <source>
        <strain>Ames ancestor</strain>
    </source>
</reference>
<reference key="3">
    <citation type="submission" date="2004-01" db="EMBL/GenBank/DDBJ databases">
        <title>Complete genome sequence of Bacillus anthracis Sterne.</title>
        <authorList>
            <person name="Brettin T.S."/>
            <person name="Bruce D."/>
            <person name="Challacombe J.F."/>
            <person name="Gilna P."/>
            <person name="Han C."/>
            <person name="Hill K."/>
            <person name="Hitchcock P."/>
            <person name="Jackson P."/>
            <person name="Keim P."/>
            <person name="Longmire J."/>
            <person name="Lucas S."/>
            <person name="Okinaka R."/>
            <person name="Richardson P."/>
            <person name="Rubin E."/>
            <person name="Tice H."/>
        </authorList>
    </citation>
    <scope>NUCLEOTIDE SEQUENCE [LARGE SCALE GENOMIC DNA]</scope>
    <source>
        <strain>Sterne</strain>
    </source>
</reference>
<proteinExistence type="inferred from homology"/>